<proteinExistence type="inferred from homology"/>
<reference key="1">
    <citation type="journal article" date="2002" name="Nucleic Acids Res.">
        <title>Genome sequence of Oceanobacillus iheyensis isolated from the Iheya Ridge and its unexpected adaptive capabilities to extreme environments.</title>
        <authorList>
            <person name="Takami H."/>
            <person name="Takaki Y."/>
            <person name="Uchiyama I."/>
        </authorList>
    </citation>
    <scope>NUCLEOTIDE SEQUENCE [LARGE SCALE GENOMIC DNA]</scope>
    <source>
        <strain>DSM 14371 / CIP 107618 / JCM 11309 / KCTC 3954 / HTE831</strain>
    </source>
</reference>
<sequence length="294" mass="31976">MLDKLPTEQRNPKTMDIDTKSIKEILEMMNREDFTVPQTVQKEISFIEEAVHRTIHSFKSNGRLIYIGAGTSGRLGVLDASECPPTFGVSSEMVKGLISGGLEAITKAKEGAEDSEAMAKQDLLDIKLTEHDTVIGIAASGRTPYVKGALSYANEIGASTVAISNNKNSEIGKIAEIAIEAETGPEVITGSTRLKAGTAQKLILNMISTASMIGVGKVYENLMVDLKPTNKKLVDRSKRIIMEATQVDYTTAENYLQKANNSVKTAIVMILLNCNVDEAIQHLDRAEGFIRKTK</sequence>
<comment type="function">
    <text evidence="1">Specifically catalyzes the cleavage of the D-lactyl ether substituent of MurNAc 6-phosphate, producing GlcNAc 6-phosphate and D-lactate.</text>
</comment>
<comment type="catalytic activity">
    <reaction evidence="1">
        <text>N-acetyl-D-muramate 6-phosphate + H2O = N-acetyl-D-glucosamine 6-phosphate + (R)-lactate</text>
        <dbReference type="Rhea" id="RHEA:26410"/>
        <dbReference type="ChEBI" id="CHEBI:15377"/>
        <dbReference type="ChEBI" id="CHEBI:16004"/>
        <dbReference type="ChEBI" id="CHEBI:57513"/>
        <dbReference type="ChEBI" id="CHEBI:58722"/>
        <dbReference type="EC" id="4.2.1.126"/>
    </reaction>
</comment>
<comment type="pathway">
    <text evidence="1">Amino-sugar metabolism; N-acetylmuramate degradation.</text>
</comment>
<comment type="subunit">
    <text evidence="1">Homodimer.</text>
</comment>
<comment type="miscellaneous">
    <text evidence="1">A lyase-type mechanism (elimination/hydration) is suggested for the cleavage of the lactyl ether bond of MurNAc 6-phosphate, with the formation of an alpha,beta-unsaturated aldehyde intermediate with (E)-stereochemistry, followed by the syn addition of water to give product.</text>
</comment>
<comment type="similarity">
    <text evidence="1">Belongs to the GCKR-like family. MurNAc-6-P etherase subfamily.</text>
</comment>
<accession>Q8ESL3</accession>
<keyword id="KW-0119">Carbohydrate metabolism</keyword>
<keyword id="KW-0456">Lyase</keyword>
<keyword id="KW-1185">Reference proteome</keyword>
<evidence type="ECO:0000255" key="1">
    <source>
        <dbReference type="HAMAP-Rule" id="MF_00068"/>
    </source>
</evidence>
<feature type="chain" id="PRO_0000249637" description="N-acetylmuramic acid 6-phosphate etherase">
    <location>
        <begin position="1"/>
        <end position="294"/>
    </location>
</feature>
<feature type="domain" description="SIS" evidence="1">
    <location>
        <begin position="54"/>
        <end position="217"/>
    </location>
</feature>
<feature type="active site" description="Proton donor" evidence="1">
    <location>
        <position position="82"/>
    </location>
</feature>
<feature type="active site" evidence="1">
    <location>
        <position position="113"/>
    </location>
</feature>
<protein>
    <recommendedName>
        <fullName evidence="1">N-acetylmuramic acid 6-phosphate etherase</fullName>
        <shortName evidence="1">MurNAc-6-P etherase</shortName>
        <ecNumber evidence="1">4.2.1.126</ecNumber>
    </recommendedName>
    <alternativeName>
        <fullName evidence="1">N-acetylmuramic acid 6-phosphate hydrolase</fullName>
    </alternativeName>
    <alternativeName>
        <fullName evidence="1">N-acetylmuramic acid 6-phosphate lyase</fullName>
    </alternativeName>
</protein>
<organism>
    <name type="scientific">Oceanobacillus iheyensis (strain DSM 14371 / CIP 107618 / JCM 11309 / KCTC 3954 / HTE831)</name>
    <dbReference type="NCBI Taxonomy" id="221109"/>
    <lineage>
        <taxon>Bacteria</taxon>
        <taxon>Bacillati</taxon>
        <taxon>Bacillota</taxon>
        <taxon>Bacilli</taxon>
        <taxon>Bacillales</taxon>
        <taxon>Bacillaceae</taxon>
        <taxon>Oceanobacillus</taxon>
    </lineage>
</organism>
<name>MURQ_OCEIH</name>
<gene>
    <name evidence="1" type="primary">murQ</name>
    <name type="ordered locus">OB0614</name>
</gene>
<dbReference type="EC" id="4.2.1.126" evidence="1"/>
<dbReference type="EMBL" id="BA000028">
    <property type="protein sequence ID" value="BAC12570.1"/>
    <property type="molecule type" value="Genomic_DNA"/>
</dbReference>
<dbReference type="RefSeq" id="WP_011065019.1">
    <property type="nucleotide sequence ID" value="NC_004193.1"/>
</dbReference>
<dbReference type="SMR" id="Q8ESL3"/>
<dbReference type="STRING" id="221109.gene:10732818"/>
<dbReference type="KEGG" id="oih:OB0614"/>
<dbReference type="eggNOG" id="COG2103">
    <property type="taxonomic scope" value="Bacteria"/>
</dbReference>
<dbReference type="HOGENOM" id="CLU_049049_1_1_9"/>
<dbReference type="OrthoDB" id="9813395at2"/>
<dbReference type="PhylomeDB" id="Q8ESL3"/>
<dbReference type="UniPathway" id="UPA00342"/>
<dbReference type="Proteomes" id="UP000000822">
    <property type="component" value="Chromosome"/>
</dbReference>
<dbReference type="GO" id="GO:0097367">
    <property type="term" value="F:carbohydrate derivative binding"/>
    <property type="evidence" value="ECO:0007669"/>
    <property type="project" value="InterPro"/>
</dbReference>
<dbReference type="GO" id="GO:0016835">
    <property type="term" value="F:carbon-oxygen lyase activity"/>
    <property type="evidence" value="ECO:0007669"/>
    <property type="project" value="UniProtKB-UniRule"/>
</dbReference>
<dbReference type="GO" id="GO:0016803">
    <property type="term" value="F:ether hydrolase activity"/>
    <property type="evidence" value="ECO:0007669"/>
    <property type="project" value="TreeGrafter"/>
</dbReference>
<dbReference type="GO" id="GO:0046348">
    <property type="term" value="P:amino sugar catabolic process"/>
    <property type="evidence" value="ECO:0007669"/>
    <property type="project" value="InterPro"/>
</dbReference>
<dbReference type="GO" id="GO:0097173">
    <property type="term" value="P:N-acetylmuramic acid catabolic process"/>
    <property type="evidence" value="ECO:0007669"/>
    <property type="project" value="UniProtKB-UniPathway"/>
</dbReference>
<dbReference type="GO" id="GO:0009254">
    <property type="term" value="P:peptidoglycan turnover"/>
    <property type="evidence" value="ECO:0007669"/>
    <property type="project" value="TreeGrafter"/>
</dbReference>
<dbReference type="CDD" id="cd05007">
    <property type="entry name" value="SIS_Etherase"/>
    <property type="match status" value="1"/>
</dbReference>
<dbReference type="FunFam" id="1.10.8.1080:FF:000001">
    <property type="entry name" value="N-acetylmuramic acid 6-phosphate etherase"/>
    <property type="match status" value="1"/>
</dbReference>
<dbReference type="FunFam" id="3.40.50.10490:FF:000014">
    <property type="entry name" value="N-acetylmuramic acid 6-phosphate etherase"/>
    <property type="match status" value="1"/>
</dbReference>
<dbReference type="Gene3D" id="1.10.8.1080">
    <property type="match status" value="1"/>
</dbReference>
<dbReference type="Gene3D" id="3.40.50.10490">
    <property type="entry name" value="Glucose-6-phosphate isomerase like protein, domain 1"/>
    <property type="match status" value="1"/>
</dbReference>
<dbReference type="HAMAP" id="MF_00068">
    <property type="entry name" value="MurQ"/>
    <property type="match status" value="1"/>
</dbReference>
<dbReference type="InterPro" id="IPR005488">
    <property type="entry name" value="Etherase_MurQ"/>
</dbReference>
<dbReference type="InterPro" id="IPR005486">
    <property type="entry name" value="Glucokinase_regulatory_CS"/>
</dbReference>
<dbReference type="InterPro" id="IPR040190">
    <property type="entry name" value="MURQ/GCKR"/>
</dbReference>
<dbReference type="InterPro" id="IPR001347">
    <property type="entry name" value="SIS_dom"/>
</dbReference>
<dbReference type="InterPro" id="IPR046348">
    <property type="entry name" value="SIS_dom_sf"/>
</dbReference>
<dbReference type="NCBIfam" id="TIGR00274">
    <property type="entry name" value="N-acetylmuramic acid 6-phosphate etherase"/>
    <property type="match status" value="1"/>
</dbReference>
<dbReference type="NCBIfam" id="NF003915">
    <property type="entry name" value="PRK05441.1"/>
    <property type="match status" value="1"/>
</dbReference>
<dbReference type="NCBIfam" id="NF009222">
    <property type="entry name" value="PRK12570.1"/>
    <property type="match status" value="1"/>
</dbReference>
<dbReference type="PANTHER" id="PTHR10088">
    <property type="entry name" value="GLUCOKINASE REGULATORY PROTEIN"/>
    <property type="match status" value="1"/>
</dbReference>
<dbReference type="PANTHER" id="PTHR10088:SF4">
    <property type="entry name" value="GLUCOKINASE REGULATORY PROTEIN"/>
    <property type="match status" value="1"/>
</dbReference>
<dbReference type="Pfam" id="PF22645">
    <property type="entry name" value="GKRP_SIS_N"/>
    <property type="match status" value="1"/>
</dbReference>
<dbReference type="SUPFAM" id="SSF53697">
    <property type="entry name" value="SIS domain"/>
    <property type="match status" value="1"/>
</dbReference>
<dbReference type="PROSITE" id="PS01272">
    <property type="entry name" value="GCKR"/>
    <property type="match status" value="1"/>
</dbReference>
<dbReference type="PROSITE" id="PS51464">
    <property type="entry name" value="SIS"/>
    <property type="match status" value="1"/>
</dbReference>